<proteinExistence type="inferred from homology"/>
<protein>
    <recommendedName>
        <fullName>Transcription initiation factor TFIID subunit 4</fullName>
    </recommendedName>
    <alternativeName>
        <fullName>TBP-associated factor 4</fullName>
    </alternativeName>
</protein>
<name>TAF4_EREGS</name>
<dbReference type="EMBL" id="AE016816">
    <property type="protein sequence ID" value="AAS51212.1"/>
    <property type="molecule type" value="Genomic_DNA"/>
</dbReference>
<dbReference type="RefSeq" id="NP_983388.1">
    <property type="nucleotide sequence ID" value="NM_208741.1"/>
</dbReference>
<dbReference type="FunCoup" id="Q75CC5">
    <property type="interactions" value="391"/>
</dbReference>
<dbReference type="STRING" id="284811.Q75CC5"/>
<dbReference type="EnsemblFungi" id="AAS51212">
    <property type="protein sequence ID" value="AAS51212"/>
    <property type="gene ID" value="AGOS_ACL016C"/>
</dbReference>
<dbReference type="GeneID" id="4619513"/>
<dbReference type="KEGG" id="ago:AGOS_ACL016C"/>
<dbReference type="eggNOG" id="KOG2341">
    <property type="taxonomic scope" value="Eukaryota"/>
</dbReference>
<dbReference type="HOGENOM" id="CLU_036634_0_0_1"/>
<dbReference type="InParanoid" id="Q75CC5"/>
<dbReference type="OMA" id="YGWLTSS"/>
<dbReference type="OrthoDB" id="21060at2759"/>
<dbReference type="Proteomes" id="UP000000591">
    <property type="component" value="Chromosome III"/>
</dbReference>
<dbReference type="GO" id="GO:0005669">
    <property type="term" value="C:transcription factor TFIID complex"/>
    <property type="evidence" value="ECO:0000318"/>
    <property type="project" value="GO_Central"/>
</dbReference>
<dbReference type="GO" id="GO:0003682">
    <property type="term" value="F:chromatin binding"/>
    <property type="evidence" value="ECO:0007669"/>
    <property type="project" value="EnsemblFungi"/>
</dbReference>
<dbReference type="GO" id="GO:0003677">
    <property type="term" value="F:DNA binding"/>
    <property type="evidence" value="ECO:0000318"/>
    <property type="project" value="GO_Central"/>
</dbReference>
<dbReference type="GO" id="GO:0061629">
    <property type="term" value="F:RNA polymerase II-specific DNA-binding transcription factor binding"/>
    <property type="evidence" value="ECO:0007669"/>
    <property type="project" value="EnsemblFungi"/>
</dbReference>
<dbReference type="GO" id="GO:0045944">
    <property type="term" value="P:positive regulation of transcription by RNA polymerase II"/>
    <property type="evidence" value="ECO:0007669"/>
    <property type="project" value="EnsemblFungi"/>
</dbReference>
<dbReference type="GO" id="GO:0006367">
    <property type="term" value="P:transcription initiation at RNA polymerase II promoter"/>
    <property type="evidence" value="ECO:0000318"/>
    <property type="project" value="GO_Central"/>
</dbReference>
<dbReference type="CDD" id="cd08045">
    <property type="entry name" value="HFD_TAF4"/>
    <property type="match status" value="1"/>
</dbReference>
<dbReference type="InterPro" id="IPR045144">
    <property type="entry name" value="TAF4"/>
</dbReference>
<dbReference type="InterPro" id="IPR007900">
    <property type="entry name" value="TAF4_C"/>
</dbReference>
<dbReference type="PANTHER" id="PTHR15138">
    <property type="entry name" value="TRANSCRIPTION INITIATION FACTOR TFIID SUBUNIT 4"/>
    <property type="match status" value="1"/>
</dbReference>
<dbReference type="PANTHER" id="PTHR15138:SF14">
    <property type="entry name" value="TRANSCRIPTION INITIATION FACTOR TFIID SUBUNIT 4"/>
    <property type="match status" value="1"/>
</dbReference>
<dbReference type="Pfam" id="PF05236">
    <property type="entry name" value="TAF4"/>
    <property type="match status" value="1"/>
</dbReference>
<gene>
    <name type="primary">TAF4</name>
    <name type="ordered locus">ACL016C</name>
</gene>
<organism>
    <name type="scientific">Eremothecium gossypii (strain ATCC 10895 / CBS 109.51 / FGSC 9923 / NRRL Y-1056)</name>
    <name type="common">Yeast</name>
    <name type="synonym">Ashbya gossypii</name>
    <dbReference type="NCBI Taxonomy" id="284811"/>
    <lineage>
        <taxon>Eukaryota</taxon>
        <taxon>Fungi</taxon>
        <taxon>Dikarya</taxon>
        <taxon>Ascomycota</taxon>
        <taxon>Saccharomycotina</taxon>
        <taxon>Saccharomycetes</taxon>
        <taxon>Saccharomycetales</taxon>
        <taxon>Saccharomycetaceae</taxon>
        <taxon>Eremothecium</taxon>
    </lineage>
</organism>
<keyword id="KW-0539">Nucleus</keyword>
<keyword id="KW-1185">Reference proteome</keyword>
<keyword id="KW-0804">Transcription</keyword>
<keyword id="KW-0805">Transcription regulation</keyword>
<evidence type="ECO:0000250" key="1"/>
<evidence type="ECO:0000256" key="2">
    <source>
        <dbReference type="SAM" id="MobiDB-lite"/>
    </source>
</evidence>
<evidence type="ECO:0000305" key="3"/>
<sequence length="361" mass="38973">MGKSPKAADQGDTGAGGKKTKGEDGFSFGIDAEEVEPTGSDFSNDMPTPFDNFVGQDEQSNRAELPESGQPATTLALPAGGAGSGAGRKSPQKMQRAGMRRAAGAGAPKQQSDPDKLSDALLSAGVDIKEEEALLSSTVTTMKSNSQVSNSQIPLHPPFLHPSHVASMMKKVAAEQNFNQDFSKSSELLSLMSTACELYIRDIITNSIIISRHRRKAVKLNSGRRSETTRVLRDLALKQREQEERRVKRRIALGLEKEITDTKLDSGETLHRASNATANMMIAGGKKKYSWLTSGSKVNATDLKNPGKVSSAVAARGDLGIKFREAREEPGIVMRDLLHALENRRVGVNNTIAKGYARIRD</sequence>
<reference key="1">
    <citation type="journal article" date="2004" name="Science">
        <title>The Ashbya gossypii genome as a tool for mapping the ancient Saccharomyces cerevisiae genome.</title>
        <authorList>
            <person name="Dietrich F.S."/>
            <person name="Voegeli S."/>
            <person name="Brachat S."/>
            <person name="Lerch A."/>
            <person name="Gates K."/>
            <person name="Steiner S."/>
            <person name="Mohr C."/>
            <person name="Poehlmann R."/>
            <person name="Luedi P."/>
            <person name="Choi S."/>
            <person name="Wing R.A."/>
            <person name="Flavier A."/>
            <person name="Gaffney T.D."/>
            <person name="Philippsen P."/>
        </authorList>
    </citation>
    <scope>NUCLEOTIDE SEQUENCE [LARGE SCALE GENOMIC DNA]</scope>
    <source>
        <strain>ATCC 10895 / CBS 109.51 / FGSC 9923 / NRRL Y-1056</strain>
    </source>
</reference>
<reference key="2">
    <citation type="journal article" date="2013" name="G3 (Bethesda)">
        <title>Genomes of Ashbya fungi isolated from insects reveal four mating-type loci, numerous translocations, lack of transposons, and distinct gene duplications.</title>
        <authorList>
            <person name="Dietrich F.S."/>
            <person name="Voegeli S."/>
            <person name="Kuo S."/>
            <person name="Philippsen P."/>
        </authorList>
    </citation>
    <scope>GENOME REANNOTATION</scope>
    <source>
        <strain>ATCC 10895 / CBS 109.51 / FGSC 9923 / NRRL Y-1056</strain>
    </source>
</reference>
<feature type="chain" id="PRO_0000343436" description="Transcription initiation factor TFIID subunit 4">
    <location>
        <begin position="1"/>
        <end position="361"/>
    </location>
</feature>
<feature type="domain" description="Histone-fold">
    <location>
        <begin position="166"/>
        <end position="234"/>
    </location>
</feature>
<feature type="region of interest" description="Disordered" evidence="2">
    <location>
        <begin position="1"/>
        <end position="117"/>
    </location>
</feature>
<feature type="compositionally biased region" description="Low complexity" evidence="2">
    <location>
        <begin position="96"/>
        <end position="107"/>
    </location>
</feature>
<accession>Q75CC5</accession>
<comment type="function">
    <text evidence="1">Functions as a component of the DNA-binding general transcription factor complex TFIID. Binding of TFIID to a promoter (with or without TATA element) is the initial step in pre-initiation complex (PIC) formation. TFIID plays a key role in the regulation of gene expression by RNA polymerase II through different activities such as transcription activator interaction, core promoter recognition and selectivity, TFIIA and TFIIB interaction, chromatin modification (histone acetylation by TAF1), facilitation of DNA opening and initiation of transcription (By similarity).</text>
</comment>
<comment type="subunit">
    <text evidence="1">The 1.2 MDa TFIID complex is composed of TATA binding protein (TBP) and the 14 TBP-associated factors.</text>
</comment>
<comment type="subcellular location">
    <subcellularLocation>
        <location evidence="1">Nucleus</location>
    </subcellularLocation>
</comment>
<comment type="similarity">
    <text evidence="3">Belongs to the TAF4 family.</text>
</comment>